<protein>
    <recommendedName>
        <fullName evidence="1">Ribose-5-phosphate isomerase A</fullName>
        <ecNumber evidence="1">5.3.1.6</ecNumber>
    </recommendedName>
    <alternativeName>
        <fullName evidence="1">Phosphoriboisomerase A</fullName>
        <shortName evidence="1">PRI</shortName>
    </alternativeName>
</protein>
<organism>
    <name type="scientific">Francisella tularensis subsp. novicida (strain U112)</name>
    <dbReference type="NCBI Taxonomy" id="401614"/>
    <lineage>
        <taxon>Bacteria</taxon>
        <taxon>Pseudomonadati</taxon>
        <taxon>Pseudomonadota</taxon>
        <taxon>Gammaproteobacteria</taxon>
        <taxon>Thiotrichales</taxon>
        <taxon>Francisellaceae</taxon>
        <taxon>Francisella</taxon>
    </lineage>
</organism>
<keyword id="KW-0413">Isomerase</keyword>
<evidence type="ECO:0000255" key="1">
    <source>
        <dbReference type="HAMAP-Rule" id="MF_00170"/>
    </source>
</evidence>
<sequence length="224" mass="24452">MFFNKKNNQDELKKLAATEAAKSITTEITLGVGTGSTVGFLIEELVNYRDKIKTVVSSSEDSTRKLKALGFDVVDLNYAGEIDLYIDGADECNNHKELIKGGGAALTREKICVAAAKKFICIIDESKKVNTLGNFPLPIEVIPMARSYVARQIVKLGGQPVYREQTITDNGNVILDVYNLKIDNPLKLETELNQITGVVTNGIFALKPADTVIMATKDSNIVVL</sequence>
<feature type="chain" id="PRO_1000016925" description="Ribose-5-phosphate isomerase A">
    <location>
        <begin position="1"/>
        <end position="224"/>
    </location>
</feature>
<feature type="active site" description="Proton acceptor" evidence="1">
    <location>
        <position position="109"/>
    </location>
</feature>
<feature type="binding site" evidence="1">
    <location>
        <begin position="34"/>
        <end position="37"/>
    </location>
    <ligand>
        <name>substrate</name>
    </ligand>
</feature>
<feature type="binding site" evidence="1">
    <location>
        <begin position="87"/>
        <end position="90"/>
    </location>
    <ligand>
        <name>substrate</name>
    </ligand>
</feature>
<feature type="binding site" evidence="1">
    <location>
        <begin position="100"/>
        <end position="103"/>
    </location>
    <ligand>
        <name>substrate</name>
    </ligand>
</feature>
<feature type="binding site" evidence="1">
    <location>
        <position position="127"/>
    </location>
    <ligand>
        <name>substrate</name>
    </ligand>
</feature>
<name>RPIA_FRATN</name>
<proteinExistence type="inferred from homology"/>
<accession>A0Q756</accession>
<reference key="1">
    <citation type="journal article" date="2007" name="Genome Biol.">
        <title>Comparison of Francisella tularensis genomes reveals evolutionary events associated with the emergence of human pathogenic strains.</title>
        <authorList>
            <person name="Rohmer L."/>
            <person name="Fong C."/>
            <person name="Abmayr S."/>
            <person name="Wasnick M."/>
            <person name="Larson Freeman T.J."/>
            <person name="Radey M."/>
            <person name="Guina T."/>
            <person name="Svensson K."/>
            <person name="Hayden H.S."/>
            <person name="Jacobs M."/>
            <person name="Gallagher L.A."/>
            <person name="Manoil C."/>
            <person name="Ernst R.K."/>
            <person name="Drees B."/>
            <person name="Buckley D."/>
            <person name="Haugen E."/>
            <person name="Bovee D."/>
            <person name="Zhou Y."/>
            <person name="Chang J."/>
            <person name="Levy R."/>
            <person name="Lim R."/>
            <person name="Gillett W."/>
            <person name="Guenthener D."/>
            <person name="Kang A."/>
            <person name="Shaffer S.A."/>
            <person name="Taylor G."/>
            <person name="Chen J."/>
            <person name="Gallis B."/>
            <person name="D'Argenio D.A."/>
            <person name="Forsman M."/>
            <person name="Olson M.V."/>
            <person name="Goodlett D.R."/>
            <person name="Kaul R."/>
            <person name="Miller S.I."/>
            <person name="Brittnacher M.J."/>
        </authorList>
    </citation>
    <scope>NUCLEOTIDE SEQUENCE [LARGE SCALE GENOMIC DNA]</scope>
    <source>
        <strain>U112</strain>
    </source>
</reference>
<gene>
    <name evidence="1" type="primary">rpiA</name>
    <name type="ordered locus">FTN_1185</name>
</gene>
<dbReference type="EC" id="5.3.1.6" evidence="1"/>
<dbReference type="EMBL" id="CP000439">
    <property type="protein sequence ID" value="ABK90071.1"/>
    <property type="molecule type" value="Genomic_DNA"/>
</dbReference>
<dbReference type="RefSeq" id="WP_003036963.1">
    <property type="nucleotide sequence ID" value="NZ_CP009633.1"/>
</dbReference>
<dbReference type="SMR" id="A0Q756"/>
<dbReference type="GeneID" id="75265084"/>
<dbReference type="KEGG" id="ftn:FTN_1185"/>
<dbReference type="KEGG" id="ftx:AW25_822"/>
<dbReference type="BioCyc" id="FTUL401614:G1G75-1228-MONOMER"/>
<dbReference type="UniPathway" id="UPA00115">
    <property type="reaction ID" value="UER00412"/>
</dbReference>
<dbReference type="Proteomes" id="UP000000762">
    <property type="component" value="Chromosome"/>
</dbReference>
<dbReference type="GO" id="GO:0005829">
    <property type="term" value="C:cytosol"/>
    <property type="evidence" value="ECO:0007669"/>
    <property type="project" value="TreeGrafter"/>
</dbReference>
<dbReference type="GO" id="GO:0004751">
    <property type="term" value="F:ribose-5-phosphate isomerase activity"/>
    <property type="evidence" value="ECO:0007669"/>
    <property type="project" value="UniProtKB-UniRule"/>
</dbReference>
<dbReference type="GO" id="GO:0006014">
    <property type="term" value="P:D-ribose metabolic process"/>
    <property type="evidence" value="ECO:0007669"/>
    <property type="project" value="TreeGrafter"/>
</dbReference>
<dbReference type="GO" id="GO:0009052">
    <property type="term" value="P:pentose-phosphate shunt, non-oxidative branch"/>
    <property type="evidence" value="ECO:0007669"/>
    <property type="project" value="UniProtKB-UniRule"/>
</dbReference>
<dbReference type="CDD" id="cd01398">
    <property type="entry name" value="RPI_A"/>
    <property type="match status" value="1"/>
</dbReference>
<dbReference type="FunFam" id="3.30.70.260:FF:000004">
    <property type="entry name" value="Ribose-5-phosphate isomerase A"/>
    <property type="match status" value="1"/>
</dbReference>
<dbReference type="FunFam" id="3.40.50.1360:FF:000001">
    <property type="entry name" value="Ribose-5-phosphate isomerase A"/>
    <property type="match status" value="1"/>
</dbReference>
<dbReference type="Gene3D" id="3.30.70.260">
    <property type="match status" value="1"/>
</dbReference>
<dbReference type="Gene3D" id="3.40.50.1360">
    <property type="match status" value="1"/>
</dbReference>
<dbReference type="HAMAP" id="MF_00170">
    <property type="entry name" value="Rib_5P_isom_A"/>
    <property type="match status" value="1"/>
</dbReference>
<dbReference type="InterPro" id="IPR037171">
    <property type="entry name" value="NagB/RpiA_transferase-like"/>
</dbReference>
<dbReference type="InterPro" id="IPR020672">
    <property type="entry name" value="Ribose5P_isomerase_typA_subgr"/>
</dbReference>
<dbReference type="InterPro" id="IPR004788">
    <property type="entry name" value="Ribose5P_isomerase_type_A"/>
</dbReference>
<dbReference type="NCBIfam" id="NF001924">
    <property type="entry name" value="PRK00702.1"/>
    <property type="match status" value="1"/>
</dbReference>
<dbReference type="NCBIfam" id="TIGR00021">
    <property type="entry name" value="rpiA"/>
    <property type="match status" value="1"/>
</dbReference>
<dbReference type="PANTHER" id="PTHR11934">
    <property type="entry name" value="RIBOSE-5-PHOSPHATE ISOMERASE"/>
    <property type="match status" value="1"/>
</dbReference>
<dbReference type="PANTHER" id="PTHR11934:SF0">
    <property type="entry name" value="RIBOSE-5-PHOSPHATE ISOMERASE"/>
    <property type="match status" value="1"/>
</dbReference>
<dbReference type="Pfam" id="PF06026">
    <property type="entry name" value="Rib_5-P_isom_A"/>
    <property type="match status" value="1"/>
</dbReference>
<dbReference type="SUPFAM" id="SSF75445">
    <property type="entry name" value="D-ribose-5-phosphate isomerase (RpiA), lid domain"/>
    <property type="match status" value="1"/>
</dbReference>
<dbReference type="SUPFAM" id="SSF100950">
    <property type="entry name" value="NagB/RpiA/CoA transferase-like"/>
    <property type="match status" value="1"/>
</dbReference>
<comment type="function">
    <text evidence="1">Catalyzes the reversible conversion of ribose-5-phosphate to ribulose 5-phosphate.</text>
</comment>
<comment type="catalytic activity">
    <reaction evidence="1">
        <text>aldehydo-D-ribose 5-phosphate = D-ribulose 5-phosphate</text>
        <dbReference type="Rhea" id="RHEA:14657"/>
        <dbReference type="ChEBI" id="CHEBI:58121"/>
        <dbReference type="ChEBI" id="CHEBI:58273"/>
        <dbReference type="EC" id="5.3.1.6"/>
    </reaction>
</comment>
<comment type="pathway">
    <text evidence="1">Carbohydrate degradation; pentose phosphate pathway; D-ribose 5-phosphate from D-ribulose 5-phosphate (non-oxidative stage): step 1/1.</text>
</comment>
<comment type="subunit">
    <text evidence="1">Homodimer.</text>
</comment>
<comment type="similarity">
    <text evidence="1">Belongs to the ribose 5-phosphate isomerase family.</text>
</comment>